<organism>
    <name type="scientific">Streptococcus pneumoniae (strain Hungary19A-6)</name>
    <dbReference type="NCBI Taxonomy" id="487214"/>
    <lineage>
        <taxon>Bacteria</taxon>
        <taxon>Bacillati</taxon>
        <taxon>Bacillota</taxon>
        <taxon>Bacilli</taxon>
        <taxon>Lactobacillales</taxon>
        <taxon>Streptococcaceae</taxon>
        <taxon>Streptococcus</taxon>
    </lineage>
</organism>
<gene>
    <name evidence="1" type="primary">rpsK</name>
    <name type="ordered locus">SPH_0348</name>
</gene>
<accession>B1I8M3</accession>
<feature type="chain" id="PRO_1000141147" description="Small ribosomal subunit protein uS11">
    <location>
        <begin position="1"/>
        <end position="127"/>
    </location>
</feature>
<keyword id="KW-0687">Ribonucleoprotein</keyword>
<keyword id="KW-0689">Ribosomal protein</keyword>
<keyword id="KW-0694">RNA-binding</keyword>
<keyword id="KW-0699">rRNA-binding</keyword>
<protein>
    <recommendedName>
        <fullName evidence="1">Small ribosomal subunit protein uS11</fullName>
    </recommendedName>
    <alternativeName>
        <fullName evidence="2">30S ribosomal protein S11</fullName>
    </alternativeName>
</protein>
<reference key="1">
    <citation type="journal article" date="2010" name="Genome Biol.">
        <title>Structure and dynamics of the pan-genome of Streptococcus pneumoniae and closely related species.</title>
        <authorList>
            <person name="Donati C."/>
            <person name="Hiller N.L."/>
            <person name="Tettelin H."/>
            <person name="Muzzi A."/>
            <person name="Croucher N.J."/>
            <person name="Angiuoli S.V."/>
            <person name="Oggioni M."/>
            <person name="Dunning Hotopp J.C."/>
            <person name="Hu F.Z."/>
            <person name="Riley D.R."/>
            <person name="Covacci A."/>
            <person name="Mitchell T.J."/>
            <person name="Bentley S.D."/>
            <person name="Kilian M."/>
            <person name="Ehrlich G.D."/>
            <person name="Rappuoli R."/>
            <person name="Moxon E.R."/>
            <person name="Masignani V."/>
        </authorList>
    </citation>
    <scope>NUCLEOTIDE SEQUENCE [LARGE SCALE GENOMIC DNA]</scope>
    <source>
        <strain>Hungary19A-6</strain>
    </source>
</reference>
<sequence>MAKPTRKRRVKKNIESGIAHIHATFNNTIVMITDVHGNAIAWSSAGALGFKGSRKSTPFAAQMASEAAAKSAQEHGLKSVEVTVKGPGSGRESAIRALAAAGLEVTAIRDVTPVPHNGARPPKRRRV</sequence>
<comment type="function">
    <text evidence="1">Located on the platform of the 30S subunit, it bridges several disparate RNA helices of the 16S rRNA. Forms part of the Shine-Dalgarno cleft in the 70S ribosome.</text>
</comment>
<comment type="subunit">
    <text evidence="1">Part of the 30S ribosomal subunit. Interacts with proteins S7 and S18. Binds to IF-3.</text>
</comment>
<comment type="similarity">
    <text evidence="1">Belongs to the universal ribosomal protein uS11 family.</text>
</comment>
<evidence type="ECO:0000255" key="1">
    <source>
        <dbReference type="HAMAP-Rule" id="MF_01310"/>
    </source>
</evidence>
<evidence type="ECO:0000305" key="2"/>
<name>RS11_STRPI</name>
<proteinExistence type="inferred from homology"/>
<dbReference type="EMBL" id="CP000936">
    <property type="protein sequence ID" value="ACA35565.1"/>
    <property type="molecule type" value="Genomic_DNA"/>
</dbReference>
<dbReference type="RefSeq" id="WP_001118385.1">
    <property type="nucleotide sequence ID" value="NC_010380.1"/>
</dbReference>
<dbReference type="SMR" id="B1I8M3"/>
<dbReference type="GeneID" id="93964226"/>
<dbReference type="KEGG" id="spv:SPH_0348"/>
<dbReference type="HOGENOM" id="CLU_072439_5_0_9"/>
<dbReference type="Proteomes" id="UP000002163">
    <property type="component" value="Chromosome"/>
</dbReference>
<dbReference type="GO" id="GO:1990904">
    <property type="term" value="C:ribonucleoprotein complex"/>
    <property type="evidence" value="ECO:0007669"/>
    <property type="project" value="UniProtKB-KW"/>
</dbReference>
<dbReference type="GO" id="GO:0005840">
    <property type="term" value="C:ribosome"/>
    <property type="evidence" value="ECO:0007669"/>
    <property type="project" value="UniProtKB-KW"/>
</dbReference>
<dbReference type="GO" id="GO:0019843">
    <property type="term" value="F:rRNA binding"/>
    <property type="evidence" value="ECO:0007669"/>
    <property type="project" value="UniProtKB-UniRule"/>
</dbReference>
<dbReference type="GO" id="GO:0003735">
    <property type="term" value="F:structural constituent of ribosome"/>
    <property type="evidence" value="ECO:0007669"/>
    <property type="project" value="InterPro"/>
</dbReference>
<dbReference type="GO" id="GO:0006412">
    <property type="term" value="P:translation"/>
    <property type="evidence" value="ECO:0007669"/>
    <property type="project" value="UniProtKB-UniRule"/>
</dbReference>
<dbReference type="FunFam" id="3.30.420.80:FF:000001">
    <property type="entry name" value="30S ribosomal protein S11"/>
    <property type="match status" value="1"/>
</dbReference>
<dbReference type="Gene3D" id="3.30.420.80">
    <property type="entry name" value="Ribosomal protein S11"/>
    <property type="match status" value="1"/>
</dbReference>
<dbReference type="HAMAP" id="MF_01310">
    <property type="entry name" value="Ribosomal_uS11"/>
    <property type="match status" value="1"/>
</dbReference>
<dbReference type="InterPro" id="IPR001971">
    <property type="entry name" value="Ribosomal_uS11"/>
</dbReference>
<dbReference type="InterPro" id="IPR019981">
    <property type="entry name" value="Ribosomal_uS11_bac-type"/>
</dbReference>
<dbReference type="InterPro" id="IPR018102">
    <property type="entry name" value="Ribosomal_uS11_CS"/>
</dbReference>
<dbReference type="InterPro" id="IPR036967">
    <property type="entry name" value="Ribosomal_uS11_sf"/>
</dbReference>
<dbReference type="NCBIfam" id="NF003698">
    <property type="entry name" value="PRK05309.1"/>
    <property type="match status" value="1"/>
</dbReference>
<dbReference type="NCBIfam" id="TIGR03632">
    <property type="entry name" value="uS11_bact"/>
    <property type="match status" value="1"/>
</dbReference>
<dbReference type="PANTHER" id="PTHR11759">
    <property type="entry name" value="40S RIBOSOMAL PROTEIN S14/30S RIBOSOMAL PROTEIN S11"/>
    <property type="match status" value="1"/>
</dbReference>
<dbReference type="Pfam" id="PF00411">
    <property type="entry name" value="Ribosomal_S11"/>
    <property type="match status" value="1"/>
</dbReference>
<dbReference type="PIRSF" id="PIRSF002131">
    <property type="entry name" value="Ribosomal_S11"/>
    <property type="match status" value="1"/>
</dbReference>
<dbReference type="SUPFAM" id="SSF53137">
    <property type="entry name" value="Translational machinery components"/>
    <property type="match status" value="1"/>
</dbReference>
<dbReference type="PROSITE" id="PS00054">
    <property type="entry name" value="RIBOSOMAL_S11"/>
    <property type="match status" value="1"/>
</dbReference>